<accession>Q3Z4S5</accession>
<proteinExistence type="inferred from homology"/>
<comment type="function">
    <text evidence="2">Catalyzes the reversible transfer of the terminal phosphate group between ATP and AMP. Plays an important role in cellular energy homeostasis and in adenine nucleotide metabolism.</text>
</comment>
<comment type="catalytic activity">
    <reaction evidence="2">
        <text>AMP + ATP = 2 ADP</text>
        <dbReference type="Rhea" id="RHEA:12973"/>
        <dbReference type="ChEBI" id="CHEBI:30616"/>
        <dbReference type="ChEBI" id="CHEBI:456215"/>
        <dbReference type="ChEBI" id="CHEBI:456216"/>
        <dbReference type="EC" id="2.7.4.3"/>
    </reaction>
</comment>
<comment type="pathway">
    <text evidence="2">Purine metabolism; AMP biosynthesis via salvage pathway; AMP from ADP: step 1/1.</text>
</comment>
<comment type="subunit">
    <text evidence="2">Monomer.</text>
</comment>
<comment type="subcellular location">
    <subcellularLocation>
        <location evidence="2">Cytoplasm</location>
    </subcellularLocation>
</comment>
<comment type="domain">
    <text evidence="2">Consists of three domains, a large central CORE domain and two small peripheral domains, NMPbind and LID, which undergo movements during catalysis. The LID domain closes over the site of phosphoryl transfer upon ATP binding. Assembling and dissambling the active center during each catalytic cycle provides an effective means to prevent ATP hydrolysis.</text>
</comment>
<comment type="similarity">
    <text evidence="2">Belongs to the adenylate kinase family.</text>
</comment>
<protein>
    <recommendedName>
        <fullName evidence="2">Adenylate kinase</fullName>
        <shortName evidence="2">AK</shortName>
        <ecNumber evidence="2">2.7.4.3</ecNumber>
    </recommendedName>
    <alternativeName>
        <fullName evidence="2">ATP-AMP transphosphorylase</fullName>
    </alternativeName>
    <alternativeName>
        <fullName evidence="2">ATP:AMP phosphotransferase</fullName>
    </alternativeName>
    <alternativeName>
        <fullName evidence="2">Adenylate monophosphate kinase</fullName>
    </alternativeName>
</protein>
<feature type="chain" id="PRO_1000058908" description="Adenylate kinase">
    <location>
        <begin position="1"/>
        <end position="214"/>
    </location>
</feature>
<feature type="region of interest" description="NMP" evidence="2">
    <location>
        <begin position="30"/>
        <end position="59"/>
    </location>
</feature>
<feature type="region of interest" description="LID">
    <location>
        <begin position="122"/>
        <end position="159"/>
    </location>
</feature>
<feature type="binding site" evidence="2">
    <location>
        <begin position="10"/>
        <end position="15"/>
    </location>
    <ligand>
        <name>ATP</name>
        <dbReference type="ChEBI" id="CHEBI:30616"/>
    </ligand>
</feature>
<feature type="binding site" evidence="2">
    <location>
        <position position="31"/>
    </location>
    <ligand>
        <name>AMP</name>
        <dbReference type="ChEBI" id="CHEBI:456215"/>
    </ligand>
</feature>
<feature type="binding site" evidence="2">
    <location>
        <position position="36"/>
    </location>
    <ligand>
        <name>AMP</name>
        <dbReference type="ChEBI" id="CHEBI:456215"/>
    </ligand>
</feature>
<feature type="binding site" evidence="2">
    <location>
        <begin position="57"/>
        <end position="59"/>
    </location>
    <ligand>
        <name>AMP</name>
        <dbReference type="ChEBI" id="CHEBI:456215"/>
    </ligand>
</feature>
<feature type="binding site" evidence="2">
    <location>
        <begin position="85"/>
        <end position="88"/>
    </location>
    <ligand>
        <name>AMP</name>
        <dbReference type="ChEBI" id="CHEBI:456215"/>
    </ligand>
</feature>
<feature type="binding site" evidence="2">
    <location>
        <position position="92"/>
    </location>
    <ligand>
        <name>AMP</name>
        <dbReference type="ChEBI" id="CHEBI:456215"/>
    </ligand>
</feature>
<feature type="binding site" evidence="2">
    <location>
        <position position="123"/>
    </location>
    <ligand>
        <name>ATP</name>
        <dbReference type="ChEBI" id="CHEBI:30616"/>
    </ligand>
</feature>
<feature type="binding site" evidence="2">
    <location>
        <begin position="132"/>
        <end position="133"/>
    </location>
    <ligand>
        <name>ATP</name>
        <dbReference type="ChEBI" id="CHEBI:30616"/>
    </ligand>
</feature>
<feature type="binding site" evidence="2">
    <location>
        <position position="156"/>
    </location>
    <ligand>
        <name>AMP</name>
        <dbReference type="ChEBI" id="CHEBI:456215"/>
    </ligand>
</feature>
<feature type="binding site" evidence="2">
    <location>
        <position position="167"/>
    </location>
    <ligand>
        <name>AMP</name>
        <dbReference type="ChEBI" id="CHEBI:456215"/>
    </ligand>
</feature>
<feature type="binding site" evidence="2">
    <location>
        <position position="200"/>
    </location>
    <ligand>
        <name>ATP</name>
        <dbReference type="ChEBI" id="CHEBI:30616"/>
    </ligand>
</feature>
<feature type="modified residue" description="N6-acetyllysine" evidence="1">
    <location>
        <position position="192"/>
    </location>
</feature>
<sequence>MRIILLGAPGAGKGTQAQFIMEKYGIPQISTGDMLRAAVKSGSELGKQAKDIMDAGKLVTDELVIALVKERIAQEDCRNGFLLDGFPRTIPQADAMKEAGINVDYVLEFDVPDELIVDRIVGRRVHAPSGRVYHVKFNPPKVEGKDDVTGEELTTRKDDQEETVRKRLVEYHQMTAPLIGYYFKEAEAGNTKYAKVDGTKSVAEVRADLEKILG</sequence>
<reference key="1">
    <citation type="journal article" date="2005" name="Nucleic Acids Res.">
        <title>Genome dynamics and diversity of Shigella species, the etiologic agents of bacillary dysentery.</title>
        <authorList>
            <person name="Yang F."/>
            <person name="Yang J."/>
            <person name="Zhang X."/>
            <person name="Chen L."/>
            <person name="Jiang Y."/>
            <person name="Yan Y."/>
            <person name="Tang X."/>
            <person name="Wang J."/>
            <person name="Xiong Z."/>
            <person name="Dong J."/>
            <person name="Xue Y."/>
            <person name="Zhu Y."/>
            <person name="Xu X."/>
            <person name="Sun L."/>
            <person name="Chen S."/>
            <person name="Nie H."/>
            <person name="Peng J."/>
            <person name="Xu J."/>
            <person name="Wang Y."/>
            <person name="Yuan Z."/>
            <person name="Wen Y."/>
            <person name="Yao Z."/>
            <person name="Shen Y."/>
            <person name="Qiang B."/>
            <person name="Hou Y."/>
            <person name="Yu J."/>
            <person name="Jin Q."/>
        </authorList>
    </citation>
    <scope>NUCLEOTIDE SEQUENCE [LARGE SCALE GENOMIC DNA]</scope>
    <source>
        <strain>Ss046</strain>
    </source>
</reference>
<organism>
    <name type="scientific">Shigella sonnei (strain Ss046)</name>
    <dbReference type="NCBI Taxonomy" id="300269"/>
    <lineage>
        <taxon>Bacteria</taxon>
        <taxon>Pseudomonadati</taxon>
        <taxon>Pseudomonadota</taxon>
        <taxon>Gammaproteobacteria</taxon>
        <taxon>Enterobacterales</taxon>
        <taxon>Enterobacteriaceae</taxon>
        <taxon>Shigella</taxon>
    </lineage>
</organism>
<name>KAD_SHISS</name>
<evidence type="ECO:0000250" key="1"/>
<evidence type="ECO:0000255" key="2">
    <source>
        <dbReference type="HAMAP-Rule" id="MF_00235"/>
    </source>
</evidence>
<keyword id="KW-0007">Acetylation</keyword>
<keyword id="KW-0067">ATP-binding</keyword>
<keyword id="KW-0963">Cytoplasm</keyword>
<keyword id="KW-0418">Kinase</keyword>
<keyword id="KW-0545">Nucleotide biosynthesis</keyword>
<keyword id="KW-0547">Nucleotide-binding</keyword>
<keyword id="KW-1185">Reference proteome</keyword>
<keyword id="KW-0808">Transferase</keyword>
<dbReference type="EC" id="2.7.4.3" evidence="2"/>
<dbReference type="EMBL" id="CP000038">
    <property type="protein sequence ID" value="AAZ87237.1"/>
    <property type="molecule type" value="Genomic_DNA"/>
</dbReference>
<dbReference type="RefSeq" id="WP_005141066.1">
    <property type="nucleotide sequence ID" value="NC_007384.1"/>
</dbReference>
<dbReference type="SMR" id="Q3Z4S5"/>
<dbReference type="GeneID" id="93776976"/>
<dbReference type="KEGG" id="ssn:SSON_0461"/>
<dbReference type="HOGENOM" id="CLU_032354_1_2_6"/>
<dbReference type="UniPathway" id="UPA00588">
    <property type="reaction ID" value="UER00649"/>
</dbReference>
<dbReference type="Proteomes" id="UP000002529">
    <property type="component" value="Chromosome"/>
</dbReference>
<dbReference type="GO" id="GO:0005737">
    <property type="term" value="C:cytoplasm"/>
    <property type="evidence" value="ECO:0007669"/>
    <property type="project" value="UniProtKB-SubCell"/>
</dbReference>
<dbReference type="GO" id="GO:0004017">
    <property type="term" value="F:adenylate kinase activity"/>
    <property type="evidence" value="ECO:0007669"/>
    <property type="project" value="UniProtKB-UniRule"/>
</dbReference>
<dbReference type="GO" id="GO:0005524">
    <property type="term" value="F:ATP binding"/>
    <property type="evidence" value="ECO:0007669"/>
    <property type="project" value="UniProtKB-UniRule"/>
</dbReference>
<dbReference type="GO" id="GO:0044209">
    <property type="term" value="P:AMP salvage"/>
    <property type="evidence" value="ECO:0007669"/>
    <property type="project" value="UniProtKB-UniRule"/>
</dbReference>
<dbReference type="CDD" id="cd01428">
    <property type="entry name" value="ADK"/>
    <property type="match status" value="1"/>
</dbReference>
<dbReference type="FunFam" id="3.40.50.300:FF:000106">
    <property type="entry name" value="Adenylate kinase mitochondrial"/>
    <property type="match status" value="1"/>
</dbReference>
<dbReference type="Gene3D" id="3.40.50.300">
    <property type="entry name" value="P-loop containing nucleotide triphosphate hydrolases"/>
    <property type="match status" value="1"/>
</dbReference>
<dbReference type="HAMAP" id="MF_00235">
    <property type="entry name" value="Adenylate_kinase_Adk"/>
    <property type="match status" value="1"/>
</dbReference>
<dbReference type="InterPro" id="IPR006259">
    <property type="entry name" value="Adenyl_kin_sub"/>
</dbReference>
<dbReference type="InterPro" id="IPR000850">
    <property type="entry name" value="Adenylat/UMP-CMP_kin"/>
</dbReference>
<dbReference type="InterPro" id="IPR033690">
    <property type="entry name" value="Adenylat_kinase_CS"/>
</dbReference>
<dbReference type="InterPro" id="IPR007862">
    <property type="entry name" value="Adenylate_kinase_lid-dom"/>
</dbReference>
<dbReference type="InterPro" id="IPR027417">
    <property type="entry name" value="P-loop_NTPase"/>
</dbReference>
<dbReference type="NCBIfam" id="TIGR01351">
    <property type="entry name" value="adk"/>
    <property type="match status" value="1"/>
</dbReference>
<dbReference type="NCBIfam" id="NF001379">
    <property type="entry name" value="PRK00279.1-1"/>
    <property type="match status" value="1"/>
</dbReference>
<dbReference type="NCBIfam" id="NF001380">
    <property type="entry name" value="PRK00279.1-2"/>
    <property type="match status" value="1"/>
</dbReference>
<dbReference type="NCBIfam" id="NF001381">
    <property type="entry name" value="PRK00279.1-3"/>
    <property type="match status" value="1"/>
</dbReference>
<dbReference type="NCBIfam" id="NF011100">
    <property type="entry name" value="PRK14527.1"/>
    <property type="match status" value="1"/>
</dbReference>
<dbReference type="PANTHER" id="PTHR23359">
    <property type="entry name" value="NUCLEOTIDE KINASE"/>
    <property type="match status" value="1"/>
</dbReference>
<dbReference type="Pfam" id="PF00406">
    <property type="entry name" value="ADK"/>
    <property type="match status" value="1"/>
</dbReference>
<dbReference type="Pfam" id="PF05191">
    <property type="entry name" value="ADK_lid"/>
    <property type="match status" value="1"/>
</dbReference>
<dbReference type="PRINTS" id="PR00094">
    <property type="entry name" value="ADENYLTKNASE"/>
</dbReference>
<dbReference type="SUPFAM" id="SSF52540">
    <property type="entry name" value="P-loop containing nucleoside triphosphate hydrolases"/>
    <property type="match status" value="1"/>
</dbReference>
<dbReference type="PROSITE" id="PS00113">
    <property type="entry name" value="ADENYLATE_KINASE"/>
    <property type="match status" value="1"/>
</dbReference>
<gene>
    <name evidence="2" type="primary">adk</name>
    <name type="ordered locus">SSON_0461</name>
</gene>